<feature type="chain" id="PRO_0000460300" description="Dioxygenase peniF">
    <location>
        <begin position="1"/>
        <end position="308"/>
    </location>
</feature>
<feature type="binding site" evidence="1">
    <location>
        <position position="144"/>
    </location>
    <ligand>
        <name>Fe cation</name>
        <dbReference type="ChEBI" id="CHEBI:24875"/>
    </ligand>
</feature>
<feature type="binding site" evidence="1">
    <location>
        <position position="225"/>
    </location>
    <ligand>
        <name>Fe cation</name>
        <dbReference type="ChEBI" id="CHEBI:24875"/>
    </ligand>
</feature>
<protein>
    <recommendedName>
        <fullName evidence="4">Dioxygenase peniF</fullName>
        <ecNumber evidence="5">1.14.11.-</ecNumber>
    </recommendedName>
    <alternativeName>
        <fullName evidence="4">Penifulvin A biosynthesis cluster protein F</fullName>
    </alternativeName>
</protein>
<proteinExistence type="inferred from homology"/>
<organism evidence="6">
    <name type="scientific">Penicillium patulum</name>
    <name type="common">Penicillium griseofulvum</name>
    <dbReference type="NCBI Taxonomy" id="5078"/>
    <lineage>
        <taxon>Eukaryota</taxon>
        <taxon>Fungi</taxon>
        <taxon>Dikarya</taxon>
        <taxon>Ascomycota</taxon>
        <taxon>Pezizomycotina</taxon>
        <taxon>Eurotiomycetes</taxon>
        <taxon>Eurotiomycetidae</taxon>
        <taxon>Eurotiales</taxon>
        <taxon>Aspergillaceae</taxon>
        <taxon>Penicillium</taxon>
    </lineage>
</organism>
<dbReference type="EC" id="1.14.11.-" evidence="5"/>
<dbReference type="EMBL" id="MK692947">
    <property type="protein sequence ID" value="QDO73507.1"/>
    <property type="molecule type" value="Genomic_DNA"/>
</dbReference>
<dbReference type="SMR" id="A0A516F413"/>
<dbReference type="GO" id="GO:0051213">
    <property type="term" value="F:dioxygenase activity"/>
    <property type="evidence" value="ECO:0007669"/>
    <property type="project" value="UniProtKB-KW"/>
</dbReference>
<dbReference type="GO" id="GO:0046872">
    <property type="term" value="F:metal ion binding"/>
    <property type="evidence" value="ECO:0007669"/>
    <property type="project" value="UniProtKB-KW"/>
</dbReference>
<dbReference type="GO" id="GO:0009058">
    <property type="term" value="P:biosynthetic process"/>
    <property type="evidence" value="ECO:0007669"/>
    <property type="project" value="UniProtKB-ARBA"/>
</dbReference>
<dbReference type="Gene3D" id="2.60.120.620">
    <property type="entry name" value="q2cbj1_9rhob like domain"/>
    <property type="match status" value="1"/>
</dbReference>
<dbReference type="InterPro" id="IPR008775">
    <property type="entry name" value="Phytyl_CoA_dOase-like"/>
</dbReference>
<dbReference type="PANTHER" id="PTHR20883">
    <property type="entry name" value="PHYTANOYL-COA DIOXYGENASE DOMAIN CONTAINING 1"/>
    <property type="match status" value="1"/>
</dbReference>
<dbReference type="PANTHER" id="PTHR20883:SF45">
    <property type="entry name" value="PHYTANOYL-COA DIOXYGENASE FAMILY PROTEIN"/>
    <property type="match status" value="1"/>
</dbReference>
<dbReference type="Pfam" id="PF05721">
    <property type="entry name" value="PhyH"/>
    <property type="match status" value="1"/>
</dbReference>
<dbReference type="SUPFAM" id="SSF51197">
    <property type="entry name" value="Clavaminate synthase-like"/>
    <property type="match status" value="1"/>
</dbReference>
<keyword id="KW-0223">Dioxygenase</keyword>
<keyword id="KW-0408">Iron</keyword>
<keyword id="KW-0479">Metal-binding</keyword>
<keyword id="KW-0560">Oxidoreductase</keyword>
<sequence>MTVSQQPLEPTPFGLHRVQAKTTSLEGILPLLTYHGGLIVEGLVSQDILQDIEKELRPHFQQGWNTDPMFSQKTRVVCGLPGKSPTLINECFGHPLFTEVCDALITSHSSSRFGEQRYDFRSPPVLGNTVAFSTLPGNAVQRMHRDDMDHHNMLPAIASDQYEAGRDCVVTLLVAGTRTTKENGATRFIPGSHLQETLHIPDESQAVYIEMQPGDAFILLGSTFHAGSGNVTDEEERILYSVAGVKSILRQTENIYYTLPLEKVREYSPWMQKRLGFSASSPLGGHIDLKDPREVLGLPEPSDIQWFY</sequence>
<comment type="function">
    <text evidence="3">Dioxygenase; part of the gene cluster that mediates the biosynthesis of penifulvin A, a potent insecticidal sesquiterpene that features a [5.5.5.6]dioxafenestrane ring (PubMed:30908782). The first step of the pathway is performed by the sesquiterpene cyclase peniA that generates the angular triquinane scaffold silphinene via cyclization of the linear farnesyl pyrophosphate (FPP). The cytochrome P450 monooxygenase peniB and the flavin-dependent monooxygenase peniC then catalyze a series of oxidation reactions to transform silphinene into penifulvin A (PubMed:30908782). The dioxygenases peniD and peniF, as well as the acetyltransferase peniE, do not seem to be involved in the biosynthesis of penifulvin A (PubMed:30908782).</text>
</comment>
<comment type="cofactor">
    <cofactor evidence="2">
        <name>Fe cation</name>
        <dbReference type="ChEBI" id="CHEBI:24875"/>
    </cofactor>
</comment>
<comment type="subunit">
    <text evidence="2">Homodimer.</text>
</comment>
<comment type="disruption phenotype">
    <text evidence="3">Does not affect the biosynthesis of penifulvin A.</text>
</comment>
<comment type="similarity">
    <text evidence="5">Belongs to the PhyH family.</text>
</comment>
<reference key="1">
    <citation type="journal article" date="2019" name="Angew. Chem. Int. Ed.">
        <title>Unprecedented [5.5.5.6]dioxafenestrane ring construction in fungal insecticidal sesquiterpene biosynthesis.</title>
        <authorList>
            <person name="Zeng H."/>
            <person name="Yin G."/>
            <person name="Wei Q."/>
            <person name="Li D."/>
            <person name="Wang Y."/>
            <person name="Hu Y."/>
            <person name="Hu C."/>
            <person name="Zou Y."/>
        </authorList>
    </citation>
    <scope>NUCLEOTIDE SEQUENCE [GENOMIC DNA]</scope>
    <scope>FUNCTION</scope>
    <scope>DISRUPTION PHENOTYPE</scope>
    <source>
        <strain>NRRL 35584</strain>
    </source>
</reference>
<name>PENIF_PENPA</name>
<accession>A0A516F413</accession>
<gene>
    <name evidence="4" type="primary">peniF</name>
</gene>
<evidence type="ECO:0000250" key="1">
    <source>
        <dbReference type="UniProtKB" id="O14832"/>
    </source>
</evidence>
<evidence type="ECO:0000250" key="2">
    <source>
        <dbReference type="UniProtKB" id="Q4WAW9"/>
    </source>
</evidence>
<evidence type="ECO:0000269" key="3">
    <source>
    </source>
</evidence>
<evidence type="ECO:0000303" key="4">
    <source>
    </source>
</evidence>
<evidence type="ECO:0000305" key="5"/>
<evidence type="ECO:0000312" key="6">
    <source>
        <dbReference type="EMBL" id="QDO73507.1"/>
    </source>
</evidence>